<protein>
    <recommendedName>
        <fullName>Transcription initiation factor TFIID subunit 14</fullName>
    </recommendedName>
    <alternativeName>
        <fullName>Actin non-complementing mutant 1</fullName>
    </alternativeName>
    <alternativeName>
        <fullName>Chromosome stability protein 10</fullName>
    </alternativeName>
    <alternativeName>
        <fullName>SWI/SNF chromatin-remodeling complex subunit TAF14</fullName>
    </alternativeName>
    <alternativeName>
        <fullName>SWI/SNF complex 29 kDa subunit</fullName>
    </alternativeName>
    <alternativeName>
        <fullName>SWI/SNF complex subunit TAF14</fullName>
    </alternativeName>
    <alternativeName>
        <fullName>TBP-associated factor 14</fullName>
    </alternativeName>
    <alternativeName>
        <fullName>TBP-associated factor 30 kDa</fullName>
    </alternativeName>
    <alternativeName>
        <fullName>Transcription factor G 30 kDa subunit</fullName>
    </alternativeName>
    <alternativeName>
        <fullName>Transcription initiation factor TFIIF 30 kDa subunit</fullName>
    </alternativeName>
</protein>
<name>TAF14_YEAST</name>
<gene>
    <name type="primary">TAF14</name>
    <name type="synonym">ANC1</name>
    <name type="synonym">CST10</name>
    <name type="synonym">SWP29</name>
    <name type="synonym">TAF30</name>
    <name type="synonym">TFG3</name>
    <name type="ordered locus">YPL129W</name>
</gene>
<organism>
    <name type="scientific">Saccharomyces cerevisiae (strain ATCC 204508 / S288c)</name>
    <name type="common">Baker's yeast</name>
    <dbReference type="NCBI Taxonomy" id="559292"/>
    <lineage>
        <taxon>Eukaryota</taxon>
        <taxon>Fungi</taxon>
        <taxon>Dikarya</taxon>
        <taxon>Ascomycota</taxon>
        <taxon>Saccharomycotina</taxon>
        <taxon>Saccharomycetes</taxon>
        <taxon>Saccharomycetales</taxon>
        <taxon>Saccharomycetaceae</taxon>
        <taxon>Saccharomyces</taxon>
    </lineage>
</organism>
<evidence type="ECO:0000255" key="1">
    <source>
        <dbReference type="PROSITE-ProRule" id="PRU00376"/>
    </source>
</evidence>
<evidence type="ECO:0000256" key="2">
    <source>
        <dbReference type="SAM" id="MobiDB-lite"/>
    </source>
</evidence>
<evidence type="ECO:0000269" key="3">
    <source>
    </source>
</evidence>
<evidence type="ECO:0000269" key="4">
    <source>
    </source>
</evidence>
<evidence type="ECO:0000269" key="5">
    <source>
    </source>
</evidence>
<evidence type="ECO:0000269" key="6">
    <source>
    </source>
</evidence>
<evidence type="ECO:0000269" key="7">
    <source>
    </source>
</evidence>
<evidence type="ECO:0000269" key="8">
    <source>
    </source>
</evidence>
<evidence type="ECO:0000269" key="9">
    <source>
    </source>
</evidence>
<evidence type="ECO:0000269" key="10">
    <source>
    </source>
</evidence>
<evidence type="ECO:0000269" key="11">
    <source>
    </source>
</evidence>
<evidence type="ECO:0000269" key="12">
    <source>
    </source>
</evidence>
<evidence type="ECO:0000269" key="13">
    <source>
    </source>
</evidence>
<evidence type="ECO:0000269" key="14">
    <source>
    </source>
</evidence>
<evidence type="ECO:0000305" key="15"/>
<evidence type="ECO:0007744" key="16">
    <source>
        <dbReference type="PDB" id="5D7E"/>
    </source>
</evidence>
<evidence type="ECO:0007744" key="17">
    <source>
        <dbReference type="PDB" id="6MIN"/>
    </source>
</evidence>
<evidence type="ECO:0007744" key="18">
    <source>
        <dbReference type="PDB" id="6MIO"/>
    </source>
</evidence>
<evidence type="ECO:0007744" key="19">
    <source>
        <dbReference type="PDB" id="6MIP"/>
    </source>
</evidence>
<evidence type="ECO:0007744" key="20">
    <source>
        <dbReference type="PDB" id="6MIQ"/>
    </source>
</evidence>
<evidence type="ECO:0007744" key="21">
    <source>
    </source>
</evidence>
<evidence type="ECO:0007829" key="22">
    <source>
        <dbReference type="PDB" id="2L7E"/>
    </source>
</evidence>
<evidence type="ECO:0007829" key="23">
    <source>
        <dbReference type="PDB" id="3QRL"/>
    </source>
</evidence>
<evidence type="ECO:0007829" key="24">
    <source>
        <dbReference type="PDB" id="5D7E"/>
    </source>
</evidence>
<evidence type="ECO:0007829" key="25">
    <source>
        <dbReference type="PDB" id="6LQZ"/>
    </source>
</evidence>
<evidence type="ECO:0007829" key="26">
    <source>
        <dbReference type="PDB" id="7UHE"/>
    </source>
</evidence>
<accession>P35189</accession>
<accession>D6W3N8</accession>
<accession>Q02460</accession>
<comment type="function">
    <text evidence="3 4 5 6 9 10 11 12 13 14">Functions as a component of the DNA-binding general transcription factor complex TFIID, the RNA polymerase II associated general transcription factor complex TFIIF, and the chromatin-remodeling complex SWI/SNF (PubMed:10788514, PubMed:12138208, PubMed:12516863, PubMed:9618449). Binding of TFIID to a promoter (with or without TATA element) is the initial step in preinitiation complex (PIC) formation (PubMed:10788514, PubMed:12138208, PubMed:12516863, PubMed:9618449). TFIID plays a key role in the regulation of gene expression by RNA polymerase II through different activities such as transcription activator interaction, core promoter recognition and selectivity, TFIIA and TFIIB interaction, chromatin modification (histone acetylation by TAF1), facilitation of DNA opening and initiation of transcription (PubMed:10788514, PubMed:12138208, PubMed:12516863, PubMed:9618449). TFIIF is essential for the initiation of transcription by RNA polymerase II (PubMed:10788514, PubMed:12138208, PubMed:12516863, PubMed:9618449). TFIIF functions include the recruitment of RNA polymerase II to the promoter bound DNA-TBP-TFIIB complex, decreasing the affinity of RNA polymerase II for non-specific DNA, allowing for the subsequent recruitment of TFIIE and TFIIH, and facilitating RNA polymerase II elongation (PubMed:10788514, PubMed:12138208, PubMed:12516863, PubMed:30385749, PubMed:9618449). TAF14 acts as a chromatin reader that specifically recognizes and binds histones that are acylated (PubMed:26341557, PubMed:27089029). Recognizes and binds histone H3 acetylated or crotonylated at 'Lys-9' (H3K9ac and H3K9cr, respectively), with some preference for crotonylated lysine (PubMed:26341557, PubMed:27089029, PubMed:30385749). Component of the SWI/SNF complex, an ATP-dependent chromatin-remodeling complex, is required for the positive and negative regulation of gene expression of a large number of genes (PubMed:12672490). It changes chromatin structure by altering DNA-histone contacts within a nucleosome, leading eventually to a change in nucleosome position, thus facilitating or repressing binding of gene-specific transcription factors (PubMed:12672490). Component of the NuA3 histone acetyltransferase complex (PubMed:17157260). The NuA3 HAT complex has 2 functionally distinct forms. NuA3a binds H3K4me3, through the PHD finger of YNG1, and acetylates H3K14 at the promoter region of actively transcribed genes to promote transcription initiation. NuA3b binds H3K36me3 at the coding regions of actively transcribed genes, through the PWWP domain of PDP3, and coordinates transcription elongation (PubMed:25104842). Does not bind DNA (PubMed:30385749).</text>
</comment>
<comment type="subunit">
    <text evidence="3 7 9 10">The 1.2 MDa TFIID complex is composed of TATA binding protein (TBP) and the 14 TBP-associated factors. One copy of each TAF1, TAF2, TAF3, TAF7, TAF8, TAF11, TAF13, two copies of each TAF4, TAF5, TAF6, TAF9, TAF10, TAF12, and three copies of TAF14. TFIIF is composed of three different subunits: TFG1/RAP74, TFG2/RAP30 and TAF14. Component of the SWI/SNF global transcription activator complex. The 1.14 MDa SWI/SNF complex is composed of 11 different subunits: one copy each of SWI1, SNF2/SWI2, SNF5, SNF12/SWP73, ARP7/SWP61, ARP9/SWP59; two copies each of SWI3, SNF6, SNF11, SWP82; and three copies of TAF14/SWP29. Component of the chromatin-remodeling INO80 complex, at least composed of ARP4, ARP5, ARP8, RVB1, RVB2, TAF14, NHP10, IES1, IES3, IES4, IES6, ACT1, IES2, IES5 and INO80. Component of the NuA3 histone acetyltransferase (HAT) complex. The NuA3 HAT complex has 2 functionally distinct forms that participate in transcription. The NuA3b HAT complex contains an additional subunit, PDP3.</text>
</comment>
<comment type="interaction">
    <interactant intactId="EBI-18920">
        <id>P35189</id>
    </interactant>
    <interactant intactId="EBI-16484">
        <id>P34218</id>
        <label>SAS3</label>
    </interactant>
    <organismsDiffer>false</organismsDiffer>
    <experiments>3</experiments>
</comment>
<comment type="interaction">
    <interactant intactId="EBI-18920">
        <id>P35189</id>
    </interactant>
    <interactant intactId="EBI-17546">
        <id>P18480</id>
        <label>SNF5</label>
    </interactant>
    <organismsDiffer>false</organismsDiffer>
    <experiments>3</experiments>
</comment>
<comment type="interaction">
    <interactant intactId="EBI-18920">
        <id>P35189</id>
    </interactant>
    <interactant intactId="EBI-17550">
        <id>P18888</id>
        <label>SNF6</label>
    </interactant>
    <organismsDiffer>false</organismsDiffer>
    <experiments>5</experiments>
</comment>
<comment type="interaction">
    <interactant intactId="EBI-18920">
        <id>P35189</id>
    </interactant>
    <interactant intactId="EBI-31890">
        <id>Q08465</id>
        <label>YNG1</label>
    </interactant>
    <organismsDiffer>false</organismsDiffer>
    <experiments>3</experiments>
</comment>
<comment type="subcellular location">
    <subcellularLocation>
        <location>Nucleus</location>
    </subcellularLocation>
</comment>
<comment type="domain">
    <text evidence="11 12 13">The YEATS domain specifically recognizes and binds acylated histones (acetylated and crotonylated) (PubMed:26341557, PubMed:27089029, PubMed:30385749). Binds crotonylated lysine through a non-canonical pi-pi-pi stacking mechanism (PubMed:27089029, PubMed:30385749).</text>
</comment>
<comment type="miscellaneous">
    <text>TAF14 is the only non-essential TAF.</text>
</comment>
<comment type="miscellaneous">
    <text evidence="8">Present with 3100 molecules/cell in log phase SD medium.</text>
</comment>
<comment type="miscellaneous">
    <text>There is no homolog of TAF14 present in the TFIIF complexes of higher eukaryotes.</text>
</comment>
<comment type="similarity">
    <text evidence="15">Belongs to the TAF14 family.</text>
</comment>
<dbReference type="EMBL" id="U13017">
    <property type="protein sequence ID" value="AAA61644.1"/>
    <property type="molecule type" value="Genomic_DNA"/>
</dbReference>
<dbReference type="EMBL" id="Z26040">
    <property type="protein sequence ID" value="CAA81125.1"/>
    <property type="molecule type" value="Genomic_DNA"/>
</dbReference>
<dbReference type="EMBL" id="U43703">
    <property type="protein sequence ID" value="AAB68235.1"/>
    <property type="molecule type" value="Genomic_DNA"/>
</dbReference>
<dbReference type="EMBL" id="X69394">
    <property type="protein sequence ID" value="CAA49192.1"/>
    <property type="molecule type" value="Genomic_DNA"/>
</dbReference>
<dbReference type="EMBL" id="BK006949">
    <property type="protein sequence ID" value="DAA11304.1"/>
    <property type="molecule type" value="Genomic_DNA"/>
</dbReference>
<dbReference type="PIR" id="S38568">
    <property type="entry name" value="S38568"/>
</dbReference>
<dbReference type="RefSeq" id="NP_015196.1">
    <property type="nucleotide sequence ID" value="NM_001183943.1"/>
</dbReference>
<dbReference type="PDB" id="2L7E">
    <property type="method" value="NMR"/>
    <property type="chains" value="A=1-123"/>
</dbReference>
<dbReference type="PDB" id="3QRL">
    <property type="method" value="X-ray"/>
    <property type="resolution" value="1.70 A"/>
    <property type="chains" value="A=1-137"/>
</dbReference>
<dbReference type="PDB" id="5D7E">
    <property type="method" value="X-ray"/>
    <property type="resolution" value="1.90 A"/>
    <property type="chains" value="A=1-137"/>
</dbReference>
<dbReference type="PDB" id="5IOK">
    <property type="method" value="X-ray"/>
    <property type="resolution" value="2.22 A"/>
    <property type="chains" value="A=1-137"/>
</dbReference>
<dbReference type="PDB" id="5SVA">
    <property type="method" value="EM"/>
    <property type="resolution" value="15.30 A"/>
    <property type="chains" value="n=1-244"/>
</dbReference>
<dbReference type="PDB" id="6LQZ">
    <property type="method" value="NMR"/>
    <property type="chains" value="A=174-244"/>
</dbReference>
<dbReference type="PDB" id="6MIN">
    <property type="method" value="X-ray"/>
    <property type="resolution" value="1.90 A"/>
    <property type="chains" value="A=1-137"/>
</dbReference>
<dbReference type="PDB" id="6MIO">
    <property type="method" value="X-ray"/>
    <property type="resolution" value="1.85 A"/>
    <property type="chains" value="A=1-137"/>
</dbReference>
<dbReference type="PDB" id="6MIP">
    <property type="method" value="X-ray"/>
    <property type="resolution" value="2.00 A"/>
    <property type="chains" value="A=1-137"/>
</dbReference>
<dbReference type="PDB" id="6MIQ">
    <property type="method" value="X-ray"/>
    <property type="resolution" value="1.75 A"/>
    <property type="chains" value="A=1-137"/>
</dbReference>
<dbReference type="PDB" id="7F4A">
    <property type="method" value="X-ray"/>
    <property type="resolution" value="2.00 A"/>
    <property type="chains" value="A=2-137"/>
</dbReference>
<dbReference type="PDB" id="7UHE">
    <property type="method" value="X-ray"/>
    <property type="resolution" value="1.66 A"/>
    <property type="chains" value="A/C=168-243"/>
</dbReference>
<dbReference type="PDB" id="8U77">
    <property type="method" value="X-ray"/>
    <property type="resolution" value="1.93 A"/>
    <property type="chains" value="A/C/E/G=176-243"/>
</dbReference>
<dbReference type="PDBsum" id="2L7E"/>
<dbReference type="PDBsum" id="3QRL"/>
<dbReference type="PDBsum" id="5D7E"/>
<dbReference type="PDBsum" id="5IOK"/>
<dbReference type="PDBsum" id="5SVA"/>
<dbReference type="PDBsum" id="6LQZ"/>
<dbReference type="PDBsum" id="6MIN"/>
<dbReference type="PDBsum" id="6MIO"/>
<dbReference type="PDBsum" id="6MIP"/>
<dbReference type="PDBsum" id="6MIQ"/>
<dbReference type="PDBsum" id="7F4A"/>
<dbReference type="PDBsum" id="7UHE"/>
<dbReference type="PDBsum" id="8U77"/>
<dbReference type="BMRB" id="P35189"/>
<dbReference type="SMR" id="P35189"/>
<dbReference type="BioGRID" id="36052">
    <property type="interactions" value="334"/>
</dbReference>
<dbReference type="ComplexPortal" id="CPX-1149">
    <property type="entry name" value="General transcription factor TFIIF complex"/>
</dbReference>
<dbReference type="ComplexPortal" id="CPX-1150">
    <property type="entry name" value="SWI/SNF chromatin remodelling complex"/>
</dbReference>
<dbReference type="ComplexPortal" id="CPX-1642">
    <property type="entry name" value="General transcription factor complex TFIID"/>
</dbReference>
<dbReference type="ComplexPortal" id="CPX-1810">
    <property type="entry name" value="NuA3 histone acetyltransferase complex"/>
</dbReference>
<dbReference type="ComplexPortal" id="CPX-863">
    <property type="entry name" value="INO80 chromatin remodeling complex"/>
</dbReference>
<dbReference type="DIP" id="DIP-1147N"/>
<dbReference type="FunCoup" id="P35189">
    <property type="interactions" value="624"/>
</dbReference>
<dbReference type="IntAct" id="P35189">
    <property type="interactions" value="79"/>
</dbReference>
<dbReference type="MINT" id="P35189"/>
<dbReference type="STRING" id="4932.YPL129W"/>
<dbReference type="iPTMnet" id="P35189"/>
<dbReference type="PaxDb" id="4932-YPL129W"/>
<dbReference type="PeptideAtlas" id="P35189"/>
<dbReference type="DNASU" id="855974"/>
<dbReference type="EnsemblFungi" id="YPL129W_mRNA">
    <property type="protein sequence ID" value="YPL129W"/>
    <property type="gene ID" value="YPL129W"/>
</dbReference>
<dbReference type="GeneID" id="855974"/>
<dbReference type="KEGG" id="sce:YPL129W"/>
<dbReference type="AGR" id="SGD:S000006050"/>
<dbReference type="SGD" id="S000006050">
    <property type="gene designation" value="TAF14"/>
</dbReference>
<dbReference type="VEuPathDB" id="FungiDB:YPL129W"/>
<dbReference type="eggNOG" id="KOG3149">
    <property type="taxonomic scope" value="Eukaryota"/>
</dbReference>
<dbReference type="GeneTree" id="ENSGT00940000176465"/>
<dbReference type="HOGENOM" id="CLU_078004_0_0_1"/>
<dbReference type="InParanoid" id="P35189"/>
<dbReference type="OMA" id="GEFDMTI"/>
<dbReference type="OrthoDB" id="1741717at2759"/>
<dbReference type="BioCyc" id="YEAST:G3O-34028-MONOMER"/>
<dbReference type="BioGRID-ORCS" id="855974">
    <property type="hits" value="7 hits in 10 CRISPR screens"/>
</dbReference>
<dbReference type="CD-CODE" id="BE14A044">
    <property type="entry name" value="Transcriptional condensate"/>
</dbReference>
<dbReference type="EvolutionaryTrace" id="P35189"/>
<dbReference type="PRO" id="PR:P35189"/>
<dbReference type="Proteomes" id="UP000002311">
    <property type="component" value="Chromosome XVI"/>
</dbReference>
<dbReference type="RNAct" id="P35189">
    <property type="molecule type" value="protein"/>
</dbReference>
<dbReference type="GO" id="GO:0000785">
    <property type="term" value="C:chromatin"/>
    <property type="evidence" value="ECO:0000303"/>
    <property type="project" value="ComplexPortal"/>
</dbReference>
<dbReference type="GO" id="GO:0031011">
    <property type="term" value="C:Ino80 complex"/>
    <property type="evidence" value="ECO:0000314"/>
    <property type="project" value="SGD"/>
</dbReference>
<dbReference type="GO" id="GO:0016592">
    <property type="term" value="C:mediator complex"/>
    <property type="evidence" value="ECO:0000314"/>
    <property type="project" value="SGD"/>
</dbReference>
<dbReference type="GO" id="GO:0033100">
    <property type="term" value="C:NuA3 histone acetyltransferase complex"/>
    <property type="evidence" value="ECO:0000314"/>
    <property type="project" value="SGD"/>
</dbReference>
<dbReference type="GO" id="GO:1990467">
    <property type="term" value="C:NuA3a histone acetyltransferase complex"/>
    <property type="evidence" value="ECO:0000314"/>
    <property type="project" value="SGD"/>
</dbReference>
<dbReference type="GO" id="GO:1990468">
    <property type="term" value="C:NuA3b histone acetyltransferase complex"/>
    <property type="evidence" value="ECO:0000314"/>
    <property type="project" value="SGD"/>
</dbReference>
<dbReference type="GO" id="GO:0005634">
    <property type="term" value="C:nucleus"/>
    <property type="evidence" value="ECO:0000314"/>
    <property type="project" value="ComplexPortal"/>
</dbReference>
<dbReference type="GO" id="GO:0016514">
    <property type="term" value="C:SWI/SNF complex"/>
    <property type="evidence" value="ECO:0000314"/>
    <property type="project" value="SGD"/>
</dbReference>
<dbReference type="GO" id="GO:0005669">
    <property type="term" value="C:transcription factor TFIID complex"/>
    <property type="evidence" value="ECO:0000314"/>
    <property type="project" value="SGD"/>
</dbReference>
<dbReference type="GO" id="GO:0005674">
    <property type="term" value="C:transcription factor TFIIF complex"/>
    <property type="evidence" value="ECO:0000314"/>
    <property type="project" value="SGD"/>
</dbReference>
<dbReference type="GO" id="GO:0003677">
    <property type="term" value="F:DNA binding"/>
    <property type="evidence" value="ECO:0000314"/>
    <property type="project" value="SGD"/>
</dbReference>
<dbReference type="GO" id="GO:0042393">
    <property type="term" value="F:histone binding"/>
    <property type="evidence" value="ECO:0000318"/>
    <property type="project" value="GO_Central"/>
</dbReference>
<dbReference type="GO" id="GO:0016251">
    <property type="term" value="F:RNA polymerase II general transcription initiation factor activity"/>
    <property type="evidence" value="ECO:0000314"/>
    <property type="project" value="SGD"/>
</dbReference>
<dbReference type="GO" id="GO:0006338">
    <property type="term" value="P:chromatin remodeling"/>
    <property type="evidence" value="ECO:0000314"/>
    <property type="project" value="ComplexPortal"/>
</dbReference>
<dbReference type="GO" id="GO:0006281">
    <property type="term" value="P:DNA repair"/>
    <property type="evidence" value="ECO:0000303"/>
    <property type="project" value="ComplexPortal"/>
</dbReference>
<dbReference type="GO" id="GO:0006351">
    <property type="term" value="P:DNA-templated transcription"/>
    <property type="evidence" value="ECO:0000303"/>
    <property type="project" value="ComplexPortal"/>
</dbReference>
<dbReference type="GO" id="GO:0045944">
    <property type="term" value="P:positive regulation of transcription by RNA polymerase II"/>
    <property type="evidence" value="ECO:0000314"/>
    <property type="project" value="ComplexPortal"/>
</dbReference>
<dbReference type="GO" id="GO:0006355">
    <property type="term" value="P:regulation of DNA-templated transcription"/>
    <property type="evidence" value="ECO:0000314"/>
    <property type="project" value="ComplexPortal"/>
</dbReference>
<dbReference type="GO" id="GO:0006357">
    <property type="term" value="P:regulation of transcription by RNA polymerase II"/>
    <property type="evidence" value="ECO:0000314"/>
    <property type="project" value="ComplexPortal"/>
</dbReference>
<dbReference type="GO" id="GO:0051123">
    <property type="term" value="P:RNA polymerase II preinitiation complex assembly"/>
    <property type="evidence" value="ECO:0000353"/>
    <property type="project" value="ComplexPortal"/>
</dbReference>
<dbReference type="GO" id="GO:0006366">
    <property type="term" value="P:transcription by RNA polymerase II"/>
    <property type="evidence" value="ECO:0000314"/>
    <property type="project" value="SGD"/>
</dbReference>
<dbReference type="GO" id="GO:0006367">
    <property type="term" value="P:transcription initiation at RNA polymerase II promoter"/>
    <property type="evidence" value="ECO:0000314"/>
    <property type="project" value="SGD"/>
</dbReference>
<dbReference type="CDD" id="cd16905">
    <property type="entry name" value="YEATS_Taf14_like"/>
    <property type="match status" value="1"/>
</dbReference>
<dbReference type="FunFam" id="2.60.40.1970:FF:000006">
    <property type="entry name" value="Transcription initiation factor TFIID subunit 14"/>
    <property type="match status" value="1"/>
</dbReference>
<dbReference type="Gene3D" id="2.60.40.1970">
    <property type="entry name" value="YEATS domain"/>
    <property type="match status" value="1"/>
</dbReference>
<dbReference type="IDEAL" id="IID50207"/>
<dbReference type="InterPro" id="IPR027353">
    <property type="entry name" value="NET_dom"/>
</dbReference>
<dbReference type="InterPro" id="IPR016665">
    <property type="entry name" value="Sas5/TAF14"/>
</dbReference>
<dbReference type="InterPro" id="IPR038704">
    <property type="entry name" value="YEAST_sf"/>
</dbReference>
<dbReference type="InterPro" id="IPR005033">
    <property type="entry name" value="YEATS"/>
</dbReference>
<dbReference type="InterPro" id="IPR055129">
    <property type="entry name" value="YEATS_dom"/>
</dbReference>
<dbReference type="PANTHER" id="PTHR23195">
    <property type="entry name" value="YEATS DOMAIN"/>
    <property type="match status" value="1"/>
</dbReference>
<dbReference type="Pfam" id="PF17035">
    <property type="entry name" value="BET"/>
    <property type="match status" value="1"/>
</dbReference>
<dbReference type="Pfam" id="PF03366">
    <property type="entry name" value="YEATS"/>
    <property type="match status" value="1"/>
</dbReference>
<dbReference type="PIRSF" id="PIRSF016551">
    <property type="entry name" value="SAS5/TFIID_14"/>
    <property type="match status" value="1"/>
</dbReference>
<dbReference type="PROSITE" id="PS51037">
    <property type="entry name" value="YEATS"/>
    <property type="match status" value="1"/>
</dbReference>
<sequence>MVATVKRTIRIKTQQHILPEVPPVENFPVRQWSIEIVLLDDEGKEIPATIFDKVIYHLHPTFANPNRTFTDPPFRIEEQGWGGFPLDISVFLLEKAGERKIPHDLNFLQESYEVEHVIQIPLNKPLLTEELAKSGSTEETTANTGTIGKRRTTTNTTAEPKAKRAKTGSASTVKGSVDLEKLAFGLTKLNEDDLVGVVQMVTDNKTPEMNVTNNVEEGEFIIDLYSLPEGLLKSLWDYVKKNTE</sequence>
<proteinExistence type="evidence at protein level"/>
<feature type="chain" id="PRO_0000211241" description="Transcription initiation factor TFIID subunit 14">
    <location>
        <begin position="1"/>
        <end position="244"/>
    </location>
</feature>
<feature type="domain" description="YEATS" evidence="1">
    <location>
        <begin position="1"/>
        <end position="134"/>
    </location>
</feature>
<feature type="region of interest" description="Acylated histone binding" evidence="11 16">
    <location>
        <begin position="59"/>
        <end position="61"/>
    </location>
</feature>
<feature type="region of interest" description="Acylated histone binding" evidence="11 16">
    <location>
        <begin position="81"/>
        <end position="83"/>
    </location>
</feature>
<feature type="region of interest" description="Disordered" evidence="2">
    <location>
        <begin position="133"/>
        <end position="169"/>
    </location>
</feature>
<feature type="compositionally biased region" description="Low complexity" evidence="2">
    <location>
        <begin position="143"/>
        <end position="157"/>
    </location>
</feature>
<feature type="site" description="Acylated histone binding" evidence="11 16">
    <location>
        <position position="104"/>
    </location>
</feature>
<feature type="cross-link" description="Glycyl lysine isopeptide (Lys-Gly) (interchain with G-Cter in ubiquitin)" evidence="21">
    <location>
        <position position="181"/>
    </location>
</feature>
<feature type="mutagenesis site" description="Does not affect binding to acylated histone H3." evidence="12">
    <original>V</original>
    <variation>A</variation>
    <location>
        <position position="24"/>
    </location>
</feature>
<feature type="mutagenesis site" description="Abolished binding to acylated histone H3." evidence="12">
    <original>G</original>
    <variation>A</variation>
    <location>
        <position position="80"/>
    </location>
</feature>
<feature type="mutagenesis site" description="Abolished binding to acetylated histone H3." evidence="11">
    <original>W</original>
    <variation>A</variation>
    <location>
        <position position="81"/>
    </location>
</feature>
<feature type="mutagenesis site" description="Does not affect ability to bind crotonylated lysines, while abolishing binding to acetylated lysines." evidence="13">
    <original>G</original>
    <variation>A</variation>
    <location>
        <position position="82"/>
    </location>
</feature>
<feature type="sequence conflict" description="In Ref. 5; CAA49192." evidence="15" ref="5">
    <original>H</original>
    <variation>Q</variation>
    <location>
        <position position="116"/>
    </location>
</feature>
<feature type="strand" evidence="23">
    <location>
        <begin position="3"/>
        <end position="17"/>
    </location>
</feature>
<feature type="strand" evidence="23">
    <location>
        <begin position="30"/>
        <end position="39"/>
    </location>
</feature>
<feature type="strand" evidence="22">
    <location>
        <begin position="40"/>
        <end position="43"/>
    </location>
</feature>
<feature type="strand" evidence="24">
    <location>
        <begin position="45"/>
        <end position="47"/>
    </location>
</feature>
<feature type="strand" evidence="23">
    <location>
        <begin position="51"/>
        <end position="57"/>
    </location>
</feature>
<feature type="strand" evidence="23">
    <location>
        <begin position="62"/>
        <end position="64"/>
    </location>
</feature>
<feature type="strand" evidence="23">
    <location>
        <begin position="66"/>
        <end position="69"/>
    </location>
</feature>
<feature type="strand" evidence="23">
    <location>
        <begin position="76"/>
        <end position="82"/>
    </location>
</feature>
<feature type="strand" evidence="23">
    <location>
        <begin position="86"/>
        <end position="92"/>
    </location>
</feature>
<feature type="helix" evidence="23">
    <location>
        <begin position="93"/>
        <end position="95"/>
    </location>
</feature>
<feature type="strand" evidence="23">
    <location>
        <begin position="97"/>
        <end position="103"/>
    </location>
</feature>
<feature type="strand" evidence="23">
    <location>
        <begin position="107"/>
        <end position="122"/>
    </location>
</feature>
<feature type="helix" evidence="23">
    <location>
        <begin position="125"/>
        <end position="131"/>
    </location>
</feature>
<feature type="turn" evidence="23">
    <location>
        <begin position="132"/>
        <end position="134"/>
    </location>
</feature>
<feature type="helix" evidence="26">
    <location>
        <begin position="179"/>
        <end position="188"/>
    </location>
</feature>
<feature type="helix" evidence="26">
    <location>
        <begin position="191"/>
        <end position="203"/>
    </location>
</feature>
<feature type="strand" evidence="25">
    <location>
        <begin position="207"/>
        <end position="210"/>
    </location>
</feature>
<feature type="strand" evidence="26">
    <location>
        <begin position="211"/>
        <end position="214"/>
    </location>
</feature>
<feature type="turn" evidence="26">
    <location>
        <begin position="215"/>
        <end position="218"/>
    </location>
</feature>
<feature type="strand" evidence="26">
    <location>
        <begin position="219"/>
        <end position="223"/>
    </location>
</feature>
<feature type="helix" evidence="26">
    <location>
        <begin position="224"/>
        <end position="226"/>
    </location>
</feature>
<feature type="helix" evidence="26">
    <location>
        <begin position="229"/>
        <end position="242"/>
    </location>
</feature>
<reference key="1">
    <citation type="journal article" date="1994" name="Genes Dev.">
        <title>TFIIF-TAF-RNA polymerase II connection.</title>
        <authorList>
            <person name="Henry N.L."/>
            <person name="Campbell A.M."/>
            <person name="Feaver W.J."/>
            <person name="Poon D."/>
            <person name="Weil P.A."/>
            <person name="Kornberg R.D."/>
        </authorList>
    </citation>
    <scope>NUCLEOTIDE SEQUENCE [GENOMIC DNA]</scope>
    <scope>PROTEIN SEQUENCE OF 189-222</scope>
    <source>
        <strain>ATCC 208279 / BJ926</strain>
    </source>
</reference>
<reference key="2">
    <citation type="journal article" date="1994" name="Mol. Biol. Cell">
        <title>A nuclear protein with sequence similarity to proteins implicated in human acute leukemias is important for cellular morphogenesis and actin cytoskeletal function in Saccharomyces cerevisiae.</title>
        <authorList>
            <person name="Welch M.D."/>
            <person name="Drubin D.G."/>
        </authorList>
    </citation>
    <scope>NUCLEOTIDE SEQUENCE [GENOMIC DNA]</scope>
</reference>
<reference key="3">
    <citation type="journal article" date="1997" name="Nature">
        <title>The nucleotide sequence of Saccharomyces cerevisiae chromosome XVI.</title>
        <authorList>
            <person name="Bussey H."/>
            <person name="Storms R.K."/>
            <person name="Ahmed A."/>
            <person name="Albermann K."/>
            <person name="Allen E."/>
            <person name="Ansorge W."/>
            <person name="Araujo R."/>
            <person name="Aparicio A."/>
            <person name="Barrell B.G."/>
            <person name="Badcock K."/>
            <person name="Benes V."/>
            <person name="Botstein D."/>
            <person name="Bowman S."/>
            <person name="Brueckner M."/>
            <person name="Carpenter J."/>
            <person name="Cherry J.M."/>
            <person name="Chung E."/>
            <person name="Churcher C.M."/>
            <person name="Coster F."/>
            <person name="Davis K."/>
            <person name="Davis R.W."/>
            <person name="Dietrich F.S."/>
            <person name="Delius H."/>
            <person name="DiPaolo T."/>
            <person name="Dubois E."/>
            <person name="Duesterhoeft A."/>
            <person name="Duncan M."/>
            <person name="Floeth M."/>
            <person name="Fortin N."/>
            <person name="Friesen J.D."/>
            <person name="Fritz C."/>
            <person name="Goffeau A."/>
            <person name="Hall J."/>
            <person name="Hebling U."/>
            <person name="Heumann K."/>
            <person name="Hilbert H."/>
            <person name="Hillier L.W."/>
            <person name="Hunicke-Smith S."/>
            <person name="Hyman R.W."/>
            <person name="Johnston M."/>
            <person name="Kalman S."/>
            <person name="Kleine K."/>
            <person name="Komp C."/>
            <person name="Kurdi O."/>
            <person name="Lashkari D."/>
            <person name="Lew H."/>
            <person name="Lin A."/>
            <person name="Lin D."/>
            <person name="Louis E.J."/>
            <person name="Marathe R."/>
            <person name="Messenguy F."/>
            <person name="Mewes H.-W."/>
            <person name="Mirtipati S."/>
            <person name="Moestl D."/>
            <person name="Mueller-Auer S."/>
            <person name="Namath A."/>
            <person name="Nentwich U."/>
            <person name="Oefner P."/>
            <person name="Pearson D."/>
            <person name="Petel F.X."/>
            <person name="Pohl T.M."/>
            <person name="Purnelle B."/>
            <person name="Rajandream M.A."/>
            <person name="Rechmann S."/>
            <person name="Rieger M."/>
            <person name="Riles L."/>
            <person name="Roberts D."/>
            <person name="Schaefer M."/>
            <person name="Scharfe M."/>
            <person name="Scherens B."/>
            <person name="Schramm S."/>
            <person name="Schroeder M."/>
            <person name="Sdicu A.-M."/>
            <person name="Tettelin H."/>
            <person name="Urrestarazu L.A."/>
            <person name="Ushinsky S."/>
            <person name="Vierendeels F."/>
            <person name="Vissers S."/>
            <person name="Voss H."/>
            <person name="Walsh S.V."/>
            <person name="Wambutt R."/>
            <person name="Wang Y."/>
            <person name="Wedler E."/>
            <person name="Wedler H."/>
            <person name="Winnett E."/>
            <person name="Zhong W.-W."/>
            <person name="Zollner A."/>
            <person name="Vo D.H."/>
            <person name="Hani J."/>
        </authorList>
    </citation>
    <scope>NUCLEOTIDE SEQUENCE [LARGE SCALE GENOMIC DNA]</scope>
    <source>
        <strain>ATCC 204508 / S288c</strain>
    </source>
</reference>
<reference key="4">
    <citation type="journal article" date="2014" name="G3 (Bethesda)">
        <title>The reference genome sequence of Saccharomyces cerevisiae: Then and now.</title>
        <authorList>
            <person name="Engel S.R."/>
            <person name="Dietrich F.S."/>
            <person name="Fisk D.G."/>
            <person name="Binkley G."/>
            <person name="Balakrishnan R."/>
            <person name="Costanzo M.C."/>
            <person name="Dwight S.S."/>
            <person name="Hitz B.C."/>
            <person name="Karra K."/>
            <person name="Nash R.S."/>
            <person name="Weng S."/>
            <person name="Wong E.D."/>
            <person name="Lloyd P."/>
            <person name="Skrzypek M.S."/>
            <person name="Miyasato S.R."/>
            <person name="Simison M."/>
            <person name="Cherry J.M."/>
        </authorList>
    </citation>
    <scope>GENOME REANNOTATION</scope>
    <source>
        <strain>ATCC 204508 / S288c</strain>
    </source>
</reference>
<reference key="5">
    <citation type="journal article" date="1993" name="Mol. Cell. Biol.">
        <title>An essential yeast gene encoding a TTAGGG repeat-binding protein.</title>
        <authorList>
            <person name="Brigati C."/>
            <person name="Kurtz S."/>
            <person name="Balderes D."/>
            <person name="Vidali G."/>
            <person name="Shore D.M."/>
        </authorList>
    </citation>
    <scope>NUCLEOTIDE SEQUENCE [GENOMIC DNA] OF 10-244</scope>
    <source>
        <strain>LN224</strain>
    </source>
</reference>
<reference key="6">
    <citation type="journal article" date="2000" name="Genes Dev.">
        <title>The something about silencing protein, Sas3, is the catalytic subunit of NuA3, a yTAF(II)30-containing HAT complex that interacts with the Spt16 subunit of the yeast CP (Cdc68/Pob3)-FACT complex.</title>
        <authorList>
            <person name="John S."/>
            <person name="Howe L."/>
            <person name="Tafrov S.T."/>
            <person name="Grant P.A."/>
            <person name="Sternglanz R."/>
            <person name="Workman J.L."/>
        </authorList>
    </citation>
    <scope>PROTEIN SEQUENCE OF 189-203</scope>
    <scope>INTERACTION WITH SAS3</scope>
</reference>
<reference key="7">
    <citation type="journal article" date="1992" name="J. Biol. Chem.">
        <title>Purification and characterization of yeast RNA polymerase II general initiation factor g.</title>
        <authorList>
            <person name="Henry N.L."/>
            <person name="Sayre M.H."/>
            <person name="Kornberg R.D."/>
        </authorList>
    </citation>
    <scope>CHARACTERIZATION</scope>
</reference>
<reference key="8">
    <citation type="journal article" date="1998" name="Microbiol. Mol. Biol. Rev.">
        <title>Molecular genetics of the RNA polymerase II general transcriptional machinery.</title>
        <authorList>
            <person name="Hampsey M."/>
        </authorList>
    </citation>
    <scope>FUNCTION</scope>
    <scope>TAF14 IN TFIIF</scope>
</reference>
<reference key="9">
    <citation type="journal article" date="2000" name="J. Biol. Chem.">
        <title>Identification of two novel TAF subunits of the yeast Saccharomyces cerevisiae TFIID complex.</title>
        <authorList>
            <person name="Sanders S.L."/>
            <person name="Weil P.A."/>
        </authorList>
    </citation>
    <scope>FUNCTION</scope>
    <scope>SUBUNIT</scope>
</reference>
<reference key="10">
    <citation type="journal article" date="2002" name="EMBO J.">
        <title>Mapping histone fold TAFs within yeast TFIID.</title>
        <authorList>
            <person name="Leurent C."/>
            <person name="Sanders S.L."/>
            <person name="Ruhlmann C."/>
            <person name="Mallouh V."/>
            <person name="Weil P.A."/>
            <person name="Kirschner D.B."/>
            <person name="Tora L."/>
            <person name="Schultz P."/>
        </authorList>
    </citation>
    <scope>3D-STRUCTURE</scope>
    <scope>ELECTRON MICROSCOPY OF TFIID</scope>
</reference>
<reference key="11">
    <citation type="journal article" date="2002" name="Mol. Cell. Biol.">
        <title>Molecular characterization of Saccharomyces cerevisiae TFIID.</title>
        <authorList>
            <person name="Sanders S.L."/>
            <person name="Garbett K.A."/>
            <person name="Weil P.A."/>
        </authorList>
    </citation>
    <scope>FUNCTION</scope>
    <scope>TFIID STOICHIOMETRY</scope>
</reference>
<reference key="12">
    <citation type="journal article" date="2002" name="Plant Mol. Biol.">
        <title>Multi-protein complexes in eukaryotic gene transcription.</title>
        <authorList>
            <person name="Martinez E."/>
        </authorList>
    </citation>
    <scope>FUNCTION</scope>
</reference>
<reference key="13">
    <citation type="journal article" date="2003" name="Mol. Cell">
        <title>Involvement of actin-related proteins in ATP-dependent chromatin remodeling.</title>
        <authorList>
            <person name="Shen X."/>
            <person name="Ranallo R."/>
            <person name="Choi E."/>
            <person name="Wu C."/>
        </authorList>
    </citation>
    <scope>IDENTIFICATION IN THE INO80 COMPLEX</scope>
</reference>
<reference key="14">
    <citation type="journal article" date="2012" name="Proteomics">
        <title>Sites of ubiquitin attachment in Saccharomyces cerevisiae.</title>
        <authorList>
            <person name="Starita L.M."/>
            <person name="Lo R.S."/>
            <person name="Eng J.K."/>
            <person name="von Haller P.D."/>
            <person name="Fields S."/>
        </authorList>
    </citation>
    <scope>UBIQUITINATION [LARGE SCALE ANALYSIS] AT LYS-181</scope>
    <scope>IDENTIFICATION BY MASS SPECTROMETRY [LARGE SCALE ANALYSIS]</scope>
</reference>
<reference key="15">
    <citation type="journal article" date="2003" name="Nat. Struct. Biol.">
        <title>Structural analysis of the yeast SWI/SNF chromatin remodeling complex.</title>
        <authorList>
            <person name="Smith C.L."/>
            <person name="Horowitz-Scherer R."/>
            <person name="Flanagan J.F."/>
            <person name="Woodcock C.L."/>
            <person name="Peterson C.L."/>
        </authorList>
    </citation>
    <scope>3D-STRUCTURE MODELING OF THE SWI/SNF COMPLEX</scope>
    <scope>ELECTRON MICROSCOPY OF THE SWI/SNF COMPLEX</scope>
</reference>
<reference key="16">
    <citation type="journal article" date="2003" name="Curr. Opin. Genet. Dev.">
        <title>Recent advances in understanding chromatin remodeling by SWI/SNF complexes.</title>
        <authorList>
            <person name="Martens J.A."/>
            <person name="Winston F."/>
        </authorList>
    </citation>
    <scope>FUNCTION</scope>
    <scope>SWI/SNF STOICHIOMETRY</scope>
</reference>
<reference key="17">
    <citation type="journal article" date="2003" name="Nature">
        <title>Global analysis of protein expression in yeast.</title>
        <authorList>
            <person name="Ghaemmaghami S."/>
            <person name="Huh W.-K."/>
            <person name="Bower K."/>
            <person name="Howson R.W."/>
            <person name="Belle A."/>
            <person name="Dephoure N."/>
            <person name="O'Shea E.K."/>
            <person name="Weissman J.S."/>
        </authorList>
    </citation>
    <scope>LEVEL OF PROTEIN EXPRESSION [LARGE SCALE ANALYSIS]</scope>
</reference>
<reference key="18">
    <citation type="journal article" date="2006" name="Mol. Cell">
        <title>Yng1 PHD finger binding to H3 trimethylated at K4 promotes NuA3 HAT activity at K14 of H3 and transcription at a subset of targeted ORFs.</title>
        <authorList>
            <person name="Taverna S.D."/>
            <person name="Ilin S."/>
            <person name="Rogers R.S."/>
            <person name="Tanny J.C."/>
            <person name="Lavender H."/>
            <person name="Li H."/>
            <person name="Baker L."/>
            <person name="Boyle J."/>
            <person name="Blair L.P."/>
            <person name="Chait B.T."/>
            <person name="Patel D.J."/>
            <person name="Aitchison J.D."/>
            <person name="Tackett A.J."/>
            <person name="Allis C.D."/>
        </authorList>
    </citation>
    <scope>FUNCTION OF THE NUA3 COMPLEX</scope>
    <scope>IDENTIFICATION IN THE NUA3 COMPLEX</scope>
    <scope>IDENTIFICATION BY MASS SPECTROMETRY</scope>
</reference>
<reference key="19">
    <citation type="journal article" date="2014" name="Mol. Cell. Proteomics">
        <title>A PWWP domain-containing protein targets the NuA3 acetyltransferase complex via histone H3 lysine 36 trimethylation to coordinate transcriptional elongation at coding regions.</title>
        <authorList>
            <person name="Gilbert T.M."/>
            <person name="McDaniel S.L."/>
            <person name="Byrum S.D."/>
            <person name="Cades J.A."/>
            <person name="Dancy B.C."/>
            <person name="Wade H."/>
            <person name="Tackett A.J."/>
            <person name="Strahl B.D."/>
            <person name="Taverna S.D."/>
        </authorList>
    </citation>
    <scope>SUBUNIT</scope>
</reference>
<reference key="20">
    <citation type="journal article" date="2015" name="Genes Dev.">
        <title>Association of Taf14 with acetylated histone H3 directs gene transcription and the DNA damage response.</title>
        <authorList>
            <person name="Shanle E.K."/>
            <person name="Andrews F.H."/>
            <person name="Meriesh H."/>
            <person name="McDaniel S.L."/>
            <person name="Dronamraju R."/>
            <person name="DiFiore J.V."/>
            <person name="Jha D."/>
            <person name="Wozniak G.G."/>
            <person name="Bridgers J.B."/>
            <person name="Kerschner J.L."/>
            <person name="Krajewski K."/>
            <person name="Martin G.M."/>
            <person name="Morrison A.J."/>
            <person name="Kutateladze T.G."/>
            <person name="Strahl B.D."/>
        </authorList>
    </citation>
    <scope>X-RAY CRYSTALLOGRAPHY (1.90 ANGSTROMS) OF 1-137</scope>
    <scope>MUTAGENESIS OF TRP-81</scope>
</reference>
<reference key="21">
    <citation type="journal article" date="2016" name="Nat. Chem. Biol.">
        <title>The Taf14 YEATS domain is a reader of histone crotonylation.</title>
        <authorList>
            <person name="Andrews F.H."/>
            <person name="Shinsky S.A."/>
            <person name="Shanle E.K."/>
            <person name="Bridgers J.B."/>
            <person name="Gest A."/>
            <person name="Tsun I.K."/>
            <person name="Krajewski K."/>
            <person name="Shi X."/>
            <person name="Strahl B.D."/>
            <person name="Kutateladze T.G."/>
        </authorList>
    </citation>
    <scope>X-RAY CRYSTALLOGRAPHY (2.22 ANGSTROMS) OF 1-137</scope>
    <scope>FUNCTION</scope>
    <scope>DOMAIN</scope>
    <scope>MUTAGENESIS OF VAL-24 AND GLY-80</scope>
</reference>
<reference evidence="17 18 19 20" key="22">
    <citation type="journal article" date="2018" name="Nat. Commun.">
        <title>Structural insights into the pi-pi-pi stacking mechanism and DNA-binding activity of the YEATS domain.</title>
        <authorList>
            <person name="Klein B.J."/>
            <person name="Vann K.R."/>
            <person name="Andrews F.H."/>
            <person name="Wang W.W."/>
            <person name="Zhang J."/>
            <person name="Zhang Y."/>
            <person name="Beloglazkina A.A."/>
            <person name="Mi W."/>
            <person name="Li Y."/>
            <person name="Li H."/>
            <person name="Shi X."/>
            <person name="Kutateladze A.G."/>
            <person name="Strahl B.D."/>
            <person name="Liu W.R."/>
            <person name="Kutateladze T.G."/>
        </authorList>
    </citation>
    <scope>X-RAY CRYSTALLOGRAPHY (1.75 ANGSTROMS) OF 1-137</scope>
    <scope>FUNCTION</scope>
    <scope>DOMAIN</scope>
    <scope>MUTAGENESIS OF GLY-82</scope>
</reference>
<keyword id="KW-0002">3D-structure</keyword>
<keyword id="KW-0903">Direct protein sequencing</keyword>
<keyword id="KW-1017">Isopeptide bond</keyword>
<keyword id="KW-0539">Nucleus</keyword>
<keyword id="KW-1185">Reference proteome</keyword>
<keyword id="KW-0804">Transcription</keyword>
<keyword id="KW-0805">Transcription regulation</keyword>
<keyword id="KW-0832">Ubl conjugation</keyword>